<reference key="1">
    <citation type="journal article" date="2003" name="Proc. Natl. Acad. Sci. U.S.A.">
        <title>Complete genome sequence of the Q-fever pathogen, Coxiella burnetii.</title>
        <authorList>
            <person name="Seshadri R."/>
            <person name="Paulsen I.T."/>
            <person name="Eisen J.A."/>
            <person name="Read T.D."/>
            <person name="Nelson K.E."/>
            <person name="Nelson W.C."/>
            <person name="Ward N.L."/>
            <person name="Tettelin H."/>
            <person name="Davidsen T.M."/>
            <person name="Beanan M.J."/>
            <person name="DeBoy R.T."/>
            <person name="Daugherty S.C."/>
            <person name="Brinkac L.M."/>
            <person name="Madupu R."/>
            <person name="Dodson R.J."/>
            <person name="Khouri H.M."/>
            <person name="Lee K.H."/>
            <person name="Carty H.A."/>
            <person name="Scanlan D."/>
            <person name="Heinzen R.A."/>
            <person name="Thompson H.A."/>
            <person name="Samuel J.E."/>
            <person name="Fraser C.M."/>
            <person name="Heidelberg J.F."/>
        </authorList>
    </citation>
    <scope>NUCLEOTIDE SEQUENCE [LARGE SCALE GENOMIC DNA]</scope>
    <source>
        <strain>RSA 493 / Nine Mile phase I</strain>
    </source>
</reference>
<name>RL27_COXBU</name>
<comment type="similarity">
    <text evidence="1">Belongs to the bacterial ribosomal protein bL27 family.</text>
</comment>
<gene>
    <name evidence="1" type="primary">rpmA</name>
    <name type="ordered locus">CBU_0386</name>
</gene>
<organism>
    <name type="scientific">Coxiella burnetii (strain RSA 493 / Nine Mile phase I)</name>
    <dbReference type="NCBI Taxonomy" id="227377"/>
    <lineage>
        <taxon>Bacteria</taxon>
        <taxon>Pseudomonadati</taxon>
        <taxon>Pseudomonadota</taxon>
        <taxon>Gammaproteobacteria</taxon>
        <taxon>Legionellales</taxon>
        <taxon>Coxiellaceae</taxon>
        <taxon>Coxiella</taxon>
    </lineage>
</organism>
<protein>
    <recommendedName>
        <fullName evidence="1">Large ribosomal subunit protein bL27</fullName>
    </recommendedName>
    <alternativeName>
        <fullName evidence="3">50S ribosomal protein L27</fullName>
    </alternativeName>
</protein>
<dbReference type="EMBL" id="AE016828">
    <property type="protein sequence ID" value="AAO89939.1"/>
    <property type="molecule type" value="Genomic_DNA"/>
</dbReference>
<dbReference type="RefSeq" id="NP_819425.1">
    <property type="nucleotide sequence ID" value="NC_002971.4"/>
</dbReference>
<dbReference type="RefSeq" id="WP_005771977.1">
    <property type="nucleotide sequence ID" value="NZ_CDBG01000001.1"/>
</dbReference>
<dbReference type="SMR" id="Q83ED9"/>
<dbReference type="STRING" id="227377.CBU_0386"/>
<dbReference type="DNASU" id="1208269"/>
<dbReference type="EnsemblBacteria" id="AAO89939">
    <property type="protein sequence ID" value="AAO89939"/>
    <property type="gene ID" value="CBU_0386"/>
</dbReference>
<dbReference type="GeneID" id="1208269"/>
<dbReference type="KEGG" id="cbu:CBU_0386"/>
<dbReference type="PATRIC" id="fig|227377.7.peg.381"/>
<dbReference type="eggNOG" id="COG0211">
    <property type="taxonomic scope" value="Bacteria"/>
</dbReference>
<dbReference type="HOGENOM" id="CLU_095424_4_1_6"/>
<dbReference type="OrthoDB" id="9803474at2"/>
<dbReference type="Proteomes" id="UP000002671">
    <property type="component" value="Chromosome"/>
</dbReference>
<dbReference type="GO" id="GO:0022625">
    <property type="term" value="C:cytosolic large ribosomal subunit"/>
    <property type="evidence" value="ECO:0000318"/>
    <property type="project" value="GO_Central"/>
</dbReference>
<dbReference type="GO" id="GO:0003735">
    <property type="term" value="F:structural constituent of ribosome"/>
    <property type="evidence" value="ECO:0000318"/>
    <property type="project" value="GO_Central"/>
</dbReference>
<dbReference type="GO" id="GO:0006412">
    <property type="term" value="P:translation"/>
    <property type="evidence" value="ECO:0007669"/>
    <property type="project" value="UniProtKB-UniRule"/>
</dbReference>
<dbReference type="FunFam" id="2.40.50.100:FF:000001">
    <property type="entry name" value="50S ribosomal protein L27"/>
    <property type="match status" value="1"/>
</dbReference>
<dbReference type="Gene3D" id="2.40.50.100">
    <property type="match status" value="1"/>
</dbReference>
<dbReference type="HAMAP" id="MF_00539">
    <property type="entry name" value="Ribosomal_bL27"/>
    <property type="match status" value="1"/>
</dbReference>
<dbReference type="InterPro" id="IPR001684">
    <property type="entry name" value="Ribosomal_bL27"/>
</dbReference>
<dbReference type="InterPro" id="IPR018261">
    <property type="entry name" value="Ribosomal_bL27_CS"/>
</dbReference>
<dbReference type="NCBIfam" id="TIGR00062">
    <property type="entry name" value="L27"/>
    <property type="match status" value="1"/>
</dbReference>
<dbReference type="PANTHER" id="PTHR15893:SF0">
    <property type="entry name" value="LARGE RIBOSOMAL SUBUNIT PROTEIN BL27M"/>
    <property type="match status" value="1"/>
</dbReference>
<dbReference type="PANTHER" id="PTHR15893">
    <property type="entry name" value="RIBOSOMAL PROTEIN L27"/>
    <property type="match status" value="1"/>
</dbReference>
<dbReference type="Pfam" id="PF01016">
    <property type="entry name" value="Ribosomal_L27"/>
    <property type="match status" value="1"/>
</dbReference>
<dbReference type="PRINTS" id="PR00063">
    <property type="entry name" value="RIBOSOMALL27"/>
</dbReference>
<dbReference type="SUPFAM" id="SSF110324">
    <property type="entry name" value="Ribosomal L27 protein-like"/>
    <property type="match status" value="1"/>
</dbReference>
<dbReference type="PROSITE" id="PS00831">
    <property type="entry name" value="RIBOSOMAL_L27"/>
    <property type="match status" value="1"/>
</dbReference>
<feature type="chain" id="PRO_0000181081" description="Large ribosomal subunit protein bL27">
    <location>
        <begin position="1"/>
        <end position="90"/>
    </location>
</feature>
<feature type="region of interest" description="Disordered" evidence="2">
    <location>
        <begin position="1"/>
        <end position="22"/>
    </location>
</feature>
<proteinExistence type="inferred from homology"/>
<sequence>MAHKKAGGSTRNGRDSNPKMLGVKRFGGERVLAGNIIVRQRGTHYRPGENMGMGRDHTLYALIEGKVKFTRKGPKKRNFVSIEPLEESQP</sequence>
<evidence type="ECO:0000255" key="1">
    <source>
        <dbReference type="HAMAP-Rule" id="MF_00539"/>
    </source>
</evidence>
<evidence type="ECO:0000256" key="2">
    <source>
        <dbReference type="SAM" id="MobiDB-lite"/>
    </source>
</evidence>
<evidence type="ECO:0000305" key="3"/>
<keyword id="KW-1185">Reference proteome</keyword>
<keyword id="KW-0687">Ribonucleoprotein</keyword>
<keyword id="KW-0689">Ribosomal protein</keyword>
<accession>Q83ED9</accession>